<gene>
    <name type="primary">OSBPL8</name>
    <name evidence="11" type="synonym">KIAA1451</name>
    <name type="synonym">ORP8</name>
    <name type="synonym">OSBP10</name>
</gene>
<dbReference type="EMBL" id="AF392452">
    <property type="protein sequence ID" value="AAL40665.1"/>
    <property type="molecule type" value="mRNA"/>
</dbReference>
<dbReference type="EMBL" id="AB040884">
    <property type="protein sequence ID" value="BAA95975.3"/>
    <property type="status" value="ALT_INIT"/>
    <property type="molecule type" value="mRNA"/>
</dbReference>
<dbReference type="EMBL" id="AK289997">
    <property type="protein sequence ID" value="BAF82686.1"/>
    <property type="molecule type" value="mRNA"/>
</dbReference>
<dbReference type="EMBL" id="CR749542">
    <property type="protein sequence ID" value="CAH18345.1"/>
    <property type="molecule type" value="mRNA"/>
</dbReference>
<dbReference type="EMBL" id="AC117491">
    <property type="status" value="NOT_ANNOTATED_CDS"/>
    <property type="molecule type" value="Genomic_DNA"/>
</dbReference>
<dbReference type="EMBL" id="AC122687">
    <property type="status" value="NOT_ANNOTATED_CDS"/>
    <property type="molecule type" value="Genomic_DNA"/>
</dbReference>
<dbReference type="EMBL" id="AC124943">
    <property type="status" value="NOT_ANNOTATED_CDS"/>
    <property type="molecule type" value="Genomic_DNA"/>
</dbReference>
<dbReference type="EMBL" id="BC093834">
    <property type="protein sequence ID" value="AAH93834.1"/>
    <property type="molecule type" value="mRNA"/>
</dbReference>
<dbReference type="EMBL" id="BC101529">
    <property type="protein sequence ID" value="AAI01530.1"/>
    <property type="molecule type" value="mRNA"/>
</dbReference>
<dbReference type="EMBL" id="BC111728">
    <property type="protein sequence ID" value="AAI11729.1"/>
    <property type="molecule type" value="mRNA"/>
</dbReference>
<dbReference type="EMBL" id="AF323730">
    <property type="protein sequence ID" value="AAG53411.1"/>
    <property type="status" value="ALT_FRAME"/>
    <property type="molecule type" value="mRNA"/>
</dbReference>
<dbReference type="CCDS" id="CCDS31862.1">
    <molecule id="Q9BZF1-1"/>
</dbReference>
<dbReference type="CCDS" id="CCDS41814.1">
    <molecule id="Q9BZF1-3"/>
</dbReference>
<dbReference type="RefSeq" id="NP_001003712.1">
    <molecule id="Q9BZF1-3"/>
    <property type="nucleotide sequence ID" value="NM_001003712.2"/>
</dbReference>
<dbReference type="RefSeq" id="NP_001306581.1">
    <molecule id="Q9BZF1-3"/>
    <property type="nucleotide sequence ID" value="NM_001319652.2"/>
</dbReference>
<dbReference type="RefSeq" id="NP_001306584.1">
    <property type="nucleotide sequence ID" value="NM_001319655.1"/>
</dbReference>
<dbReference type="RefSeq" id="NP_065892.1">
    <molecule id="Q9BZF1-1"/>
    <property type="nucleotide sequence ID" value="NM_020841.5"/>
</dbReference>
<dbReference type="RefSeq" id="XP_005268678.1">
    <molecule id="Q9BZF1-1"/>
    <property type="nucleotide sequence ID" value="XM_005268621.6"/>
</dbReference>
<dbReference type="RefSeq" id="XP_006719287.1">
    <property type="nucleotide sequence ID" value="XM_006719224.2"/>
</dbReference>
<dbReference type="RefSeq" id="XP_047284206.1">
    <molecule id="Q9BZF1-1"/>
    <property type="nucleotide sequence ID" value="XM_047428250.1"/>
</dbReference>
<dbReference type="RefSeq" id="XP_047284207.1">
    <molecule id="Q9BZF1-1"/>
    <property type="nucleotide sequence ID" value="XM_047428251.1"/>
</dbReference>
<dbReference type="RefSeq" id="XP_047284210.1">
    <molecule id="Q9BZF1-3"/>
    <property type="nucleotide sequence ID" value="XM_047428254.1"/>
</dbReference>
<dbReference type="RefSeq" id="XP_047284211.1">
    <molecule id="Q9BZF1-3"/>
    <property type="nucleotide sequence ID" value="XM_047428255.1"/>
</dbReference>
<dbReference type="RefSeq" id="XP_054226981.1">
    <molecule id="Q9BZF1-1"/>
    <property type="nucleotide sequence ID" value="XM_054371006.1"/>
</dbReference>
<dbReference type="RefSeq" id="XP_054226982.1">
    <molecule id="Q9BZF1-1"/>
    <property type="nucleotide sequence ID" value="XM_054371007.1"/>
</dbReference>
<dbReference type="RefSeq" id="XP_054226984.1">
    <molecule id="Q9BZF1-1"/>
    <property type="nucleotide sequence ID" value="XM_054371009.1"/>
</dbReference>
<dbReference type="RefSeq" id="XP_054226988.1">
    <molecule id="Q9BZF1-3"/>
    <property type="nucleotide sequence ID" value="XM_054371013.1"/>
</dbReference>
<dbReference type="PDB" id="1V88">
    <property type="method" value="NMR"/>
    <property type="chains" value="A=149-265"/>
</dbReference>
<dbReference type="PDB" id="5U77">
    <property type="method" value="X-ray"/>
    <property type="resolution" value="2.16 A"/>
    <property type="chains" value="A=149-265"/>
</dbReference>
<dbReference type="PDB" id="5U78">
    <property type="method" value="X-ray"/>
    <property type="resolution" value="1.98 A"/>
    <property type="chains" value="A/B/C/D=149-265"/>
</dbReference>
<dbReference type="PDB" id="8P7A">
    <property type="method" value="X-ray"/>
    <property type="resolution" value="2.56 A"/>
    <property type="chains" value="A/B=411-791"/>
</dbReference>
<dbReference type="PDBsum" id="1V88"/>
<dbReference type="PDBsum" id="5U77"/>
<dbReference type="PDBsum" id="5U78"/>
<dbReference type="PDBsum" id="8P7A"/>
<dbReference type="BMRB" id="Q9BZF1"/>
<dbReference type="SMR" id="Q9BZF1"/>
<dbReference type="BioGRID" id="125383">
    <property type="interactions" value="293"/>
</dbReference>
<dbReference type="DIP" id="DIP-56130N"/>
<dbReference type="FunCoup" id="Q9BZF1">
    <property type="interactions" value="4587"/>
</dbReference>
<dbReference type="IntAct" id="Q9BZF1">
    <property type="interactions" value="128"/>
</dbReference>
<dbReference type="MINT" id="Q9BZF1"/>
<dbReference type="STRING" id="9606.ENSP00000261183"/>
<dbReference type="SwissLipids" id="SLP:000001535"/>
<dbReference type="TCDB" id="2.D.1.1.2">
    <property type="family name" value="the pi4p/ps counter transporter (p/p-ct) family"/>
</dbReference>
<dbReference type="GlyGen" id="Q9BZF1">
    <property type="glycosylation" value="1 site, 1 O-linked glycan (1 site)"/>
</dbReference>
<dbReference type="iPTMnet" id="Q9BZF1"/>
<dbReference type="PhosphoSitePlus" id="Q9BZF1"/>
<dbReference type="SwissPalm" id="Q9BZF1"/>
<dbReference type="BioMuta" id="OSBPL8"/>
<dbReference type="DMDM" id="39932732"/>
<dbReference type="jPOST" id="Q9BZF1"/>
<dbReference type="MassIVE" id="Q9BZF1"/>
<dbReference type="PaxDb" id="9606-ENSP00000261183"/>
<dbReference type="PeptideAtlas" id="Q9BZF1"/>
<dbReference type="ProteomicsDB" id="19821"/>
<dbReference type="ProteomicsDB" id="79828">
    <molecule id="Q9BZF1-1"/>
</dbReference>
<dbReference type="ProteomicsDB" id="79829">
    <molecule id="Q9BZF1-2"/>
</dbReference>
<dbReference type="Pumba" id="Q9BZF1"/>
<dbReference type="Antibodypedia" id="680">
    <property type="antibodies" value="97 antibodies from 20 providers"/>
</dbReference>
<dbReference type="DNASU" id="114882"/>
<dbReference type="Ensembl" id="ENST00000261183.8">
    <molecule id="Q9BZF1-1"/>
    <property type="protein sequence ID" value="ENSP00000261183.3"/>
    <property type="gene ID" value="ENSG00000091039.17"/>
</dbReference>
<dbReference type="Ensembl" id="ENST00000393249.6">
    <molecule id="Q9BZF1-3"/>
    <property type="protein sequence ID" value="ENSP00000376939.2"/>
    <property type="gene ID" value="ENSG00000091039.17"/>
</dbReference>
<dbReference type="Ensembl" id="ENST00000393250.8">
    <molecule id="Q9BZF1-3"/>
    <property type="protein sequence ID" value="ENSP00000376940.4"/>
    <property type="gene ID" value="ENSG00000091039.17"/>
</dbReference>
<dbReference type="Ensembl" id="ENST00000611266.4">
    <molecule id="Q9BZF1-3"/>
    <property type="protein sequence ID" value="ENSP00000478240.1"/>
    <property type="gene ID" value="ENSG00000091039.17"/>
</dbReference>
<dbReference type="GeneID" id="114882"/>
<dbReference type="KEGG" id="hsa:114882"/>
<dbReference type="MANE-Select" id="ENST00000261183.8">
    <property type="protein sequence ID" value="ENSP00000261183.3"/>
    <property type="RefSeq nucleotide sequence ID" value="NM_020841.5"/>
    <property type="RefSeq protein sequence ID" value="NP_065892.1"/>
</dbReference>
<dbReference type="UCSC" id="uc001sye.2">
    <molecule id="Q9BZF1-1"/>
    <property type="organism name" value="human"/>
</dbReference>
<dbReference type="AGR" id="HGNC:16396"/>
<dbReference type="CTD" id="114882"/>
<dbReference type="DisGeNET" id="114882"/>
<dbReference type="GeneCards" id="OSBPL8"/>
<dbReference type="HGNC" id="HGNC:16396">
    <property type="gene designation" value="OSBPL8"/>
</dbReference>
<dbReference type="HPA" id="ENSG00000091039">
    <property type="expression patterns" value="Low tissue specificity"/>
</dbReference>
<dbReference type="MalaCards" id="OSBPL8"/>
<dbReference type="MIM" id="606736">
    <property type="type" value="gene"/>
</dbReference>
<dbReference type="neXtProt" id="NX_Q9BZF1"/>
<dbReference type="OpenTargets" id="ENSG00000091039"/>
<dbReference type="PharmGKB" id="PA32832"/>
<dbReference type="VEuPathDB" id="HostDB:ENSG00000091039"/>
<dbReference type="eggNOG" id="KOG2210">
    <property type="taxonomic scope" value="Eukaryota"/>
</dbReference>
<dbReference type="GeneTree" id="ENSGT00940000156622"/>
<dbReference type="InParanoid" id="Q9BZF1"/>
<dbReference type="OMA" id="VAYWEKQ"/>
<dbReference type="OrthoDB" id="10053431at2759"/>
<dbReference type="PAN-GO" id="Q9BZF1">
    <property type="GO annotations" value="6 GO annotations based on evolutionary models"/>
</dbReference>
<dbReference type="PhylomeDB" id="Q9BZF1"/>
<dbReference type="TreeFam" id="TF312807"/>
<dbReference type="PathwayCommons" id="Q9BZF1"/>
<dbReference type="Reactome" id="R-HSA-1482801">
    <property type="pathway name" value="Acyl chain remodelling of PS"/>
</dbReference>
<dbReference type="SignaLink" id="Q9BZF1"/>
<dbReference type="BioGRID-ORCS" id="114882">
    <property type="hits" value="17 hits in 1159 CRISPR screens"/>
</dbReference>
<dbReference type="ChiTaRS" id="OSBPL8">
    <property type="organism name" value="human"/>
</dbReference>
<dbReference type="EvolutionaryTrace" id="Q9BZF1"/>
<dbReference type="GeneWiki" id="OSBPL8"/>
<dbReference type="GenomeRNAi" id="114882"/>
<dbReference type="Pharos" id="Q9BZF1">
    <property type="development level" value="Tbio"/>
</dbReference>
<dbReference type="PRO" id="PR:Q9BZF1"/>
<dbReference type="Proteomes" id="UP000005640">
    <property type="component" value="Chromosome 12"/>
</dbReference>
<dbReference type="RNAct" id="Q9BZF1">
    <property type="molecule type" value="protein"/>
</dbReference>
<dbReference type="Bgee" id="ENSG00000091039">
    <property type="expression patterns" value="Expressed in lower lobe of lung and 214 other cell types or tissues"/>
</dbReference>
<dbReference type="ExpressionAtlas" id="Q9BZF1">
    <property type="expression patterns" value="baseline and differential"/>
</dbReference>
<dbReference type="GO" id="GO:0032541">
    <property type="term" value="C:cortical endoplasmic reticulum"/>
    <property type="evidence" value="ECO:0000314"/>
    <property type="project" value="UniProtKB"/>
</dbReference>
<dbReference type="GO" id="GO:0005829">
    <property type="term" value="C:cytosol"/>
    <property type="evidence" value="ECO:0000318"/>
    <property type="project" value="GO_Central"/>
</dbReference>
<dbReference type="GO" id="GO:0005783">
    <property type="term" value="C:endoplasmic reticulum"/>
    <property type="evidence" value="ECO:0000314"/>
    <property type="project" value="UniProtKB"/>
</dbReference>
<dbReference type="GO" id="GO:0005789">
    <property type="term" value="C:endoplasmic reticulum membrane"/>
    <property type="evidence" value="ECO:0007669"/>
    <property type="project" value="UniProtKB-SubCell"/>
</dbReference>
<dbReference type="GO" id="GO:0016020">
    <property type="term" value="C:membrane"/>
    <property type="evidence" value="ECO:0007005"/>
    <property type="project" value="UniProtKB"/>
</dbReference>
<dbReference type="GO" id="GO:0031965">
    <property type="term" value="C:nuclear membrane"/>
    <property type="evidence" value="ECO:0007669"/>
    <property type="project" value="UniProtKB-SubCell"/>
</dbReference>
<dbReference type="GO" id="GO:0015485">
    <property type="term" value="F:cholesterol binding"/>
    <property type="evidence" value="ECO:0000314"/>
    <property type="project" value="BHF-UCL"/>
</dbReference>
<dbReference type="GO" id="GO:0070273">
    <property type="term" value="F:phosphatidylinositol-4-phosphate binding"/>
    <property type="evidence" value="ECO:0000314"/>
    <property type="project" value="UniProtKB"/>
</dbReference>
<dbReference type="GO" id="GO:0001786">
    <property type="term" value="F:phosphatidylserine binding"/>
    <property type="evidence" value="ECO:0000314"/>
    <property type="project" value="UniProtKB"/>
</dbReference>
<dbReference type="GO" id="GO:0140343">
    <property type="term" value="F:phosphatidylserine transfer activity"/>
    <property type="evidence" value="ECO:0000314"/>
    <property type="project" value="GO_Central"/>
</dbReference>
<dbReference type="GO" id="GO:0005548">
    <property type="term" value="F:phospholipid transporter activity"/>
    <property type="evidence" value="ECO:0000304"/>
    <property type="project" value="Reactome"/>
</dbReference>
<dbReference type="GO" id="GO:0045444">
    <property type="term" value="P:fat cell differentiation"/>
    <property type="evidence" value="ECO:0000314"/>
    <property type="project" value="BHF-UCL"/>
</dbReference>
<dbReference type="GO" id="GO:0030336">
    <property type="term" value="P:negative regulation of cell migration"/>
    <property type="evidence" value="ECO:0007669"/>
    <property type="project" value="Ensembl"/>
</dbReference>
<dbReference type="GO" id="GO:0036150">
    <property type="term" value="P:phosphatidylserine acyl-chain remodeling"/>
    <property type="evidence" value="ECO:0000304"/>
    <property type="project" value="Reactome"/>
</dbReference>
<dbReference type="GO" id="GO:0015914">
    <property type="term" value="P:phospholipid transport"/>
    <property type="evidence" value="ECO:0000314"/>
    <property type="project" value="UniProtKB"/>
</dbReference>
<dbReference type="GO" id="GO:0046326">
    <property type="term" value="P:positive regulation of D-glucose import"/>
    <property type="evidence" value="ECO:0000250"/>
    <property type="project" value="BHF-UCL"/>
</dbReference>
<dbReference type="GO" id="GO:0046628">
    <property type="term" value="P:positive regulation of insulin receptor signaling pathway"/>
    <property type="evidence" value="ECO:0007669"/>
    <property type="project" value="Ensembl"/>
</dbReference>
<dbReference type="GO" id="GO:0051897">
    <property type="term" value="P:positive regulation of phosphatidylinositol 3-kinase/protein kinase B signal transduction"/>
    <property type="evidence" value="ECO:0000250"/>
    <property type="project" value="BHF-UCL"/>
</dbReference>
<dbReference type="GO" id="GO:0090204">
    <property type="term" value="P:protein localization to nuclear pore"/>
    <property type="evidence" value="ECO:0007669"/>
    <property type="project" value="Ensembl"/>
</dbReference>
<dbReference type="GO" id="GO:0070328">
    <property type="term" value="P:triglyceride homeostasis"/>
    <property type="evidence" value="ECO:0000314"/>
    <property type="project" value="BHF-UCL"/>
</dbReference>
<dbReference type="CDD" id="cd13286">
    <property type="entry name" value="PH_OPR5_ORP8"/>
    <property type="match status" value="1"/>
</dbReference>
<dbReference type="FunFam" id="1.10.287.2720:FF:000002">
    <property type="entry name" value="Oxysterol-binding protein"/>
    <property type="match status" value="1"/>
</dbReference>
<dbReference type="FunFam" id="2.30.29.30:FF:000030">
    <property type="entry name" value="Oxysterol-binding protein"/>
    <property type="match status" value="1"/>
</dbReference>
<dbReference type="FunFam" id="2.40.160.120:FF:000020">
    <property type="entry name" value="Oxysterol-binding protein"/>
    <property type="match status" value="1"/>
</dbReference>
<dbReference type="FunFam" id="3.30.70.3490:FF:000005">
    <property type="entry name" value="Oxysterol-binding protein"/>
    <property type="match status" value="1"/>
</dbReference>
<dbReference type="Gene3D" id="1.10.287.2720">
    <property type="match status" value="1"/>
</dbReference>
<dbReference type="Gene3D" id="2.40.160.120">
    <property type="match status" value="1"/>
</dbReference>
<dbReference type="Gene3D" id="3.30.70.3490">
    <property type="match status" value="1"/>
</dbReference>
<dbReference type="Gene3D" id="2.30.29.30">
    <property type="entry name" value="Pleckstrin-homology domain (PH domain)/Phosphotyrosine-binding domain (PTB)"/>
    <property type="match status" value="1"/>
</dbReference>
<dbReference type="InterPro" id="IPR037239">
    <property type="entry name" value="OSBP_sf"/>
</dbReference>
<dbReference type="InterPro" id="IPR000648">
    <property type="entry name" value="Oxysterol-bd"/>
</dbReference>
<dbReference type="InterPro" id="IPR018494">
    <property type="entry name" value="Oxysterol-bd_CS"/>
</dbReference>
<dbReference type="InterPro" id="IPR011993">
    <property type="entry name" value="PH-like_dom_sf"/>
</dbReference>
<dbReference type="InterPro" id="IPR001849">
    <property type="entry name" value="PH_domain"/>
</dbReference>
<dbReference type="PANTHER" id="PTHR10972">
    <property type="entry name" value="OXYSTEROL-BINDING PROTEIN-RELATED"/>
    <property type="match status" value="1"/>
</dbReference>
<dbReference type="PANTHER" id="PTHR10972:SF216">
    <property type="entry name" value="OXYSTEROL-BINDING PROTEIN-RELATED PROTEIN 8"/>
    <property type="match status" value="1"/>
</dbReference>
<dbReference type="Pfam" id="PF01237">
    <property type="entry name" value="Oxysterol_BP"/>
    <property type="match status" value="1"/>
</dbReference>
<dbReference type="Pfam" id="PF00169">
    <property type="entry name" value="PH"/>
    <property type="match status" value="1"/>
</dbReference>
<dbReference type="SMART" id="SM00233">
    <property type="entry name" value="PH"/>
    <property type="match status" value="1"/>
</dbReference>
<dbReference type="SUPFAM" id="SSF144000">
    <property type="entry name" value="Oxysterol-binding protein-like"/>
    <property type="match status" value="1"/>
</dbReference>
<dbReference type="SUPFAM" id="SSF50729">
    <property type="entry name" value="PH domain-like"/>
    <property type="match status" value="1"/>
</dbReference>
<dbReference type="PROSITE" id="PS01013">
    <property type="entry name" value="OSBP"/>
    <property type="match status" value="1"/>
</dbReference>
<dbReference type="PROSITE" id="PS50003">
    <property type="entry name" value="PH_DOMAIN"/>
    <property type="match status" value="1"/>
</dbReference>
<feature type="chain" id="PRO_0000100378" description="Oxysterol-binding protein-related protein 8">
    <location>
        <begin position="1"/>
        <end position="889"/>
    </location>
</feature>
<feature type="transmembrane region" description="Helical" evidence="2">
    <location>
        <begin position="871"/>
        <end position="888"/>
    </location>
</feature>
<feature type="domain" description="PH" evidence="3">
    <location>
        <begin position="148"/>
        <end position="265"/>
    </location>
</feature>
<feature type="region of interest" description="Disordered" evidence="4">
    <location>
        <begin position="1"/>
        <end position="129"/>
    </location>
</feature>
<feature type="region of interest" description="Disordered" evidence="4">
    <location>
        <begin position="322"/>
        <end position="399"/>
    </location>
</feature>
<feature type="region of interest" description="Disordered" evidence="4">
    <location>
        <begin position="771"/>
        <end position="823"/>
    </location>
</feature>
<feature type="compositionally biased region" description="Polar residues" evidence="4">
    <location>
        <begin position="28"/>
        <end position="46"/>
    </location>
</feature>
<feature type="compositionally biased region" description="Polar residues" evidence="4">
    <location>
        <begin position="62"/>
        <end position="71"/>
    </location>
</feature>
<feature type="compositionally biased region" description="Basic and acidic residues" evidence="4">
    <location>
        <begin position="73"/>
        <end position="88"/>
    </location>
</feature>
<feature type="compositionally biased region" description="Basic and acidic residues" evidence="4">
    <location>
        <begin position="95"/>
        <end position="109"/>
    </location>
</feature>
<feature type="compositionally biased region" description="Basic and acidic residues" evidence="4">
    <location>
        <begin position="116"/>
        <end position="129"/>
    </location>
</feature>
<feature type="compositionally biased region" description="Basic and acidic residues" evidence="4">
    <location>
        <begin position="322"/>
        <end position="336"/>
    </location>
</feature>
<feature type="compositionally biased region" description="Basic and acidic residues" evidence="4">
    <location>
        <begin position="346"/>
        <end position="363"/>
    </location>
</feature>
<feature type="compositionally biased region" description="Basic residues" evidence="4">
    <location>
        <begin position="781"/>
        <end position="794"/>
    </location>
</feature>
<feature type="compositionally biased region" description="Polar residues" evidence="4">
    <location>
        <begin position="805"/>
        <end position="817"/>
    </location>
</feature>
<feature type="binding site" evidence="1">
    <location>
        <begin position="420"/>
        <end position="425"/>
    </location>
    <ligand>
        <name>a 1,2-diacyl-sn-glycero-3-phospho-(1D-myo-inositol 4-phosphate)</name>
        <dbReference type="ChEBI" id="CHEBI:58178"/>
    </ligand>
</feature>
<feature type="binding site" evidence="1">
    <location>
        <begin position="420"/>
        <end position="425"/>
    </location>
    <ligand>
        <name>a 1,2-diacyl-sn-glycero-3-phospho-L-serine</name>
        <dbReference type="ChEBI" id="CHEBI:57262"/>
    </ligand>
</feature>
<feature type="binding site" evidence="1">
    <location>
        <begin position="482"/>
        <end position="485"/>
    </location>
    <ligand>
        <name>a 1,2-diacyl-sn-glycero-3-phospho-(1D-myo-inositol 4-phosphate)</name>
        <dbReference type="ChEBI" id="CHEBI:58178"/>
    </ligand>
</feature>
<feature type="binding site" evidence="1">
    <location>
        <position position="485"/>
    </location>
    <ligand>
        <name>a 1,2-diacyl-sn-glycero-3-phospho-L-serine</name>
        <dbReference type="ChEBI" id="CHEBI:57262"/>
    </ligand>
</feature>
<feature type="binding site" evidence="1">
    <location>
        <begin position="514"/>
        <end position="515"/>
    </location>
    <ligand>
        <name>a 1,2-diacyl-sn-glycero-3-phospho-(1D-myo-inositol 4-phosphate)</name>
        <dbReference type="ChEBI" id="CHEBI:58178"/>
    </ligand>
</feature>
<feature type="binding site" evidence="1">
    <location>
        <position position="540"/>
    </location>
    <ligand>
        <name>a 1,2-diacyl-sn-glycero-3-phospho-L-serine</name>
        <dbReference type="ChEBI" id="CHEBI:57262"/>
    </ligand>
</feature>
<feature type="binding site" evidence="1">
    <location>
        <position position="706"/>
    </location>
    <ligand>
        <name>a 1,2-diacyl-sn-glycero-3-phospho-(1D-myo-inositol 4-phosphate)</name>
        <dbReference type="ChEBI" id="CHEBI:58178"/>
    </ligand>
</feature>
<feature type="binding site" evidence="1">
    <location>
        <position position="710"/>
    </location>
    <ligand>
        <name>a 1,2-diacyl-sn-glycero-3-phospho-(1D-myo-inositol 4-phosphate)</name>
        <dbReference type="ChEBI" id="CHEBI:58178"/>
    </ligand>
</feature>
<feature type="binding site" evidence="1">
    <location>
        <position position="714"/>
    </location>
    <ligand>
        <name>a 1,2-diacyl-sn-glycero-3-phospho-(1D-myo-inositol 4-phosphate)</name>
        <dbReference type="ChEBI" id="CHEBI:58178"/>
    </ligand>
</feature>
<feature type="modified residue" description="N-acetylmethionine" evidence="21">
    <location>
        <position position="1"/>
    </location>
</feature>
<feature type="modified residue" description="Phosphoserine" evidence="22">
    <location>
        <position position="14"/>
    </location>
</feature>
<feature type="modified residue" description="Phosphoserine" evidence="17 22">
    <location>
        <position position="65"/>
    </location>
</feature>
<feature type="modified residue" description="Phosphoserine" evidence="16 17 19 20">
    <location>
        <position position="68"/>
    </location>
</feature>
<feature type="modified residue" description="Phosphoserine" evidence="17 18 22">
    <location>
        <position position="314"/>
    </location>
</feature>
<feature type="modified residue" description="Phosphoserine" evidence="20">
    <location>
        <position position="328"/>
    </location>
</feature>
<feature type="modified residue" description="Phosphoserine" evidence="20">
    <location>
        <position position="342"/>
    </location>
</feature>
<feature type="modified residue" description="Phosphoserine" evidence="17 20 23">
    <location>
        <position position="807"/>
    </location>
</feature>
<feature type="modified residue" description="Phosphoserine" evidence="17 20 23">
    <location>
        <position position="808"/>
    </location>
</feature>
<feature type="modified residue" description="Phosphoserine" evidence="17">
    <location>
        <position position="810"/>
    </location>
</feature>
<feature type="modified residue" description="Phosphoserine" evidence="17">
    <location>
        <position position="814"/>
    </location>
</feature>
<feature type="splice variant" id="VSP_045801" description="In isoform 3." evidence="14">
    <location>
        <begin position="1"/>
        <end position="42"/>
    </location>
</feature>
<feature type="splice variant" id="VSP_009120" description="In isoform 2." evidence="12">
    <location>
        <begin position="15"/>
        <end position="29"/>
    </location>
</feature>
<feature type="mutagenesis site" description="Impaired lipid countertransport between the endoplasmic reticulum and the plasma membrane." evidence="10">
    <original>HH</original>
    <variation>AA</variation>
    <location>
        <begin position="514"/>
        <end position="515"/>
    </location>
</feature>
<feature type="sequence conflict" description="In Ref. 5; CAH18345." evidence="14" ref="5">
    <original>M</original>
    <variation>V</variation>
    <location>
        <position position="347"/>
    </location>
</feature>
<feature type="strand" evidence="26">
    <location>
        <begin position="151"/>
        <end position="158"/>
    </location>
</feature>
<feature type="strand" evidence="25">
    <location>
        <begin position="160"/>
        <end position="162"/>
    </location>
</feature>
<feature type="strand" evidence="26">
    <location>
        <begin position="165"/>
        <end position="172"/>
    </location>
</feature>
<feature type="strand" evidence="26">
    <location>
        <begin position="175"/>
        <end position="184"/>
    </location>
</feature>
<feature type="strand" evidence="26">
    <location>
        <begin position="187"/>
        <end position="192"/>
    </location>
</feature>
<feature type="helix" evidence="26">
    <location>
        <begin position="193"/>
        <end position="195"/>
    </location>
</feature>
<feature type="strand" evidence="26">
    <location>
        <begin position="197"/>
        <end position="200"/>
    </location>
</feature>
<feature type="turn" evidence="24">
    <location>
        <begin position="203"/>
        <end position="205"/>
    </location>
</feature>
<feature type="strand" evidence="26">
    <location>
        <begin position="208"/>
        <end position="213"/>
    </location>
</feature>
<feature type="strand" evidence="26">
    <location>
        <begin position="240"/>
        <end position="249"/>
    </location>
</feature>
<feature type="helix" evidence="26">
    <location>
        <begin position="250"/>
        <end position="264"/>
    </location>
</feature>
<accession>Q9BZF1</accession>
<accession>A8K1T2</accession>
<accession>E9PE66</accession>
<accession>E9PE68</accession>
<accession>Q52LQ3</accession>
<accession>Q68D75</accession>
<accession>Q8WXP8</accession>
<accession>Q9P277</accession>
<keyword id="KW-0002">3D-structure</keyword>
<keyword id="KW-0007">Acetylation</keyword>
<keyword id="KW-0025">Alternative splicing</keyword>
<keyword id="KW-0256">Endoplasmic reticulum</keyword>
<keyword id="KW-0445">Lipid transport</keyword>
<keyword id="KW-0446">Lipid-binding</keyword>
<keyword id="KW-0472">Membrane</keyword>
<keyword id="KW-0539">Nucleus</keyword>
<keyword id="KW-0597">Phosphoprotein</keyword>
<keyword id="KW-1267">Proteomics identification</keyword>
<keyword id="KW-1185">Reference proteome</keyword>
<keyword id="KW-0812">Transmembrane</keyword>
<keyword id="KW-1133">Transmembrane helix</keyword>
<keyword id="KW-0813">Transport</keyword>
<name>OSBL8_HUMAN</name>
<comment type="function">
    <text evidence="6 7 8 10">Lipid transporter involved in lipid countertransport between the endoplasmic reticulum and the plasma membrane: specifically exchanges phosphatidylserine with phosphatidylinositol 4-phosphate (PI4P), delivering phosphatidylserine to the plasma membrane in exchange for PI4P, which is degraded by the SAC1/SACM1L phosphatase in the endoplasmic reticulum. Binds phosphatidylserine and PI4P in a mutually exclusive manner (PubMed:26206935). Binds oxysterol, 25-hydroxycholesterol and cholesterol (PubMed:17428193, PubMed:17991739, PubMed:21698267).</text>
</comment>
<comment type="subunit">
    <text evidence="8 9">Interacts with SPAG5 (PubMed:24424245). Interacts with NUP62 (PubMed:21698267).</text>
</comment>
<comment type="interaction">
    <interactant intactId="EBI-2684038">
        <id>Q9BZF1</id>
    </interactant>
    <interactant intactId="EBI-413317">
        <id>Q96R06</id>
        <label>SPAG5</label>
    </interactant>
    <organismsDiffer>false</organismsDiffer>
    <experiments>6</experiments>
</comment>
<comment type="subcellular location">
    <molecule>Isoform 1</molecule>
    <subcellularLocation>
        <location evidence="7 10">Endoplasmic reticulum membrane</location>
        <topology evidence="7">Single-pass membrane protein</topology>
    </subcellularLocation>
    <subcellularLocation>
        <location evidence="8">Nucleus membrane</location>
    </subcellularLocation>
    <text evidence="15">The presence of the N-terminus extension contains an overall negative charge that may explain the weak localization to the cortical endoplasmic reticulum (Probable).</text>
</comment>
<comment type="subcellular location">
    <molecule>Isoform 3</molecule>
    <subcellularLocation>
        <location evidence="10">Endoplasmic reticulum membrane</location>
        <topology>Single-pass membrane protein</topology>
    </subcellularLocation>
    <text evidence="10">Localizes to the cortical endoplasmic reticulum at the endoplasmic reticulum-plasma membrane contact sites.</text>
</comment>
<comment type="alternative products">
    <event type="alternative splicing"/>
    <isoform>
        <id>Q9BZF1-1</id>
        <name>1</name>
        <name evidence="13">ORP8L</name>
        <sequence type="displayed"/>
    </isoform>
    <isoform>
        <id>Q9BZF1-2</id>
        <name>2</name>
        <sequence type="described" ref="VSP_009120"/>
    </isoform>
    <isoform>
        <id>Q9BZF1-3</id>
        <name>3</name>
        <name evidence="13">ORP8S</name>
        <sequence type="described" ref="VSP_045801"/>
    </isoform>
</comment>
<comment type="tissue specificity">
    <text evidence="5 7">Widely expressed (PubMed:11735225). Expressed at higher level in macrophages (PubMed:17991739).</text>
</comment>
<comment type="similarity">
    <text evidence="14">Belongs to the OSBP family.</text>
</comment>
<comment type="sequence caution" evidence="14">
    <conflict type="frameshift">
        <sequence resource="EMBL-CDS" id="AAG53411"/>
    </conflict>
</comment>
<comment type="sequence caution" evidence="14">
    <conflict type="erroneous initiation">
        <sequence resource="EMBL-CDS" id="BAA95975"/>
    </conflict>
</comment>
<proteinExistence type="evidence at protein level"/>
<reference key="1">
    <citation type="journal article" date="2001" name="Genomics">
        <title>A family of 12 human genes containing oxysterol-binding domains.</title>
        <authorList>
            <person name="Jaworski C.J."/>
            <person name="Moreira E."/>
            <person name="Li A."/>
            <person name="Lee R."/>
            <person name="Rodriguez I.R."/>
        </authorList>
    </citation>
    <scope>NUCLEOTIDE SEQUENCE [MRNA] (ISOFORM 1)</scope>
    <scope>TISSUE SPECIFICITY</scope>
</reference>
<reference key="2">
    <citation type="journal article" date="2000" name="DNA Res.">
        <title>Prediction of the coding sequences of unidentified human genes. XVII. The complete sequences of 100 new cDNA clones from brain which code for large proteins in vitro.</title>
        <authorList>
            <person name="Nagase T."/>
            <person name="Kikuno R."/>
            <person name="Ishikawa K."/>
            <person name="Hirosawa M."/>
            <person name="Ohara O."/>
        </authorList>
    </citation>
    <scope>NUCLEOTIDE SEQUENCE [LARGE SCALE MRNA] (ISOFORM 1)</scope>
    <source>
        <tissue>Brain</tissue>
    </source>
</reference>
<reference key="3">
    <citation type="journal article" date="2002" name="DNA Res.">
        <title>Construction of expression-ready cDNA clones for KIAA genes: manual curation of 330 KIAA cDNA clones.</title>
        <authorList>
            <person name="Nakajima D."/>
            <person name="Okazaki N."/>
            <person name="Yamakawa H."/>
            <person name="Kikuno R."/>
            <person name="Ohara O."/>
            <person name="Nagase T."/>
        </authorList>
    </citation>
    <scope>SEQUENCE REVISION</scope>
</reference>
<reference key="4">
    <citation type="journal article" date="2004" name="Nat. Genet.">
        <title>Complete sequencing and characterization of 21,243 full-length human cDNAs.</title>
        <authorList>
            <person name="Ota T."/>
            <person name="Suzuki Y."/>
            <person name="Nishikawa T."/>
            <person name="Otsuki T."/>
            <person name="Sugiyama T."/>
            <person name="Irie R."/>
            <person name="Wakamatsu A."/>
            <person name="Hayashi K."/>
            <person name="Sato H."/>
            <person name="Nagai K."/>
            <person name="Kimura K."/>
            <person name="Makita H."/>
            <person name="Sekine M."/>
            <person name="Obayashi M."/>
            <person name="Nishi T."/>
            <person name="Shibahara T."/>
            <person name="Tanaka T."/>
            <person name="Ishii S."/>
            <person name="Yamamoto J."/>
            <person name="Saito K."/>
            <person name="Kawai Y."/>
            <person name="Isono Y."/>
            <person name="Nakamura Y."/>
            <person name="Nagahari K."/>
            <person name="Murakami K."/>
            <person name="Yasuda T."/>
            <person name="Iwayanagi T."/>
            <person name="Wagatsuma M."/>
            <person name="Shiratori A."/>
            <person name="Sudo H."/>
            <person name="Hosoiri T."/>
            <person name="Kaku Y."/>
            <person name="Kodaira H."/>
            <person name="Kondo H."/>
            <person name="Sugawara M."/>
            <person name="Takahashi M."/>
            <person name="Kanda K."/>
            <person name="Yokoi T."/>
            <person name="Furuya T."/>
            <person name="Kikkawa E."/>
            <person name="Omura Y."/>
            <person name="Abe K."/>
            <person name="Kamihara K."/>
            <person name="Katsuta N."/>
            <person name="Sato K."/>
            <person name="Tanikawa M."/>
            <person name="Yamazaki M."/>
            <person name="Ninomiya K."/>
            <person name="Ishibashi T."/>
            <person name="Yamashita H."/>
            <person name="Murakawa K."/>
            <person name="Fujimori K."/>
            <person name="Tanai H."/>
            <person name="Kimata M."/>
            <person name="Watanabe M."/>
            <person name="Hiraoka S."/>
            <person name="Chiba Y."/>
            <person name="Ishida S."/>
            <person name="Ono Y."/>
            <person name="Takiguchi S."/>
            <person name="Watanabe S."/>
            <person name="Yosida M."/>
            <person name="Hotuta T."/>
            <person name="Kusano J."/>
            <person name="Kanehori K."/>
            <person name="Takahashi-Fujii A."/>
            <person name="Hara H."/>
            <person name="Tanase T.-O."/>
            <person name="Nomura Y."/>
            <person name="Togiya S."/>
            <person name="Komai F."/>
            <person name="Hara R."/>
            <person name="Takeuchi K."/>
            <person name="Arita M."/>
            <person name="Imose N."/>
            <person name="Musashino K."/>
            <person name="Yuuki H."/>
            <person name="Oshima A."/>
            <person name="Sasaki N."/>
            <person name="Aotsuka S."/>
            <person name="Yoshikawa Y."/>
            <person name="Matsunawa H."/>
            <person name="Ichihara T."/>
            <person name="Shiohata N."/>
            <person name="Sano S."/>
            <person name="Moriya S."/>
            <person name="Momiyama H."/>
            <person name="Satoh N."/>
            <person name="Takami S."/>
            <person name="Terashima Y."/>
            <person name="Suzuki O."/>
            <person name="Nakagawa S."/>
            <person name="Senoh A."/>
            <person name="Mizoguchi H."/>
            <person name="Goto Y."/>
            <person name="Shimizu F."/>
            <person name="Wakebe H."/>
            <person name="Hishigaki H."/>
            <person name="Watanabe T."/>
            <person name="Sugiyama A."/>
            <person name="Takemoto M."/>
            <person name="Kawakami B."/>
            <person name="Yamazaki M."/>
            <person name="Watanabe K."/>
            <person name="Kumagai A."/>
            <person name="Itakura S."/>
            <person name="Fukuzumi Y."/>
            <person name="Fujimori Y."/>
            <person name="Komiyama M."/>
            <person name="Tashiro H."/>
            <person name="Tanigami A."/>
            <person name="Fujiwara T."/>
            <person name="Ono T."/>
            <person name="Yamada K."/>
            <person name="Fujii Y."/>
            <person name="Ozaki K."/>
            <person name="Hirao M."/>
            <person name="Ohmori Y."/>
            <person name="Kawabata A."/>
            <person name="Hikiji T."/>
            <person name="Kobatake N."/>
            <person name="Inagaki H."/>
            <person name="Ikema Y."/>
            <person name="Okamoto S."/>
            <person name="Okitani R."/>
            <person name="Kawakami T."/>
            <person name="Noguchi S."/>
            <person name="Itoh T."/>
            <person name="Shigeta K."/>
            <person name="Senba T."/>
            <person name="Matsumura K."/>
            <person name="Nakajima Y."/>
            <person name="Mizuno T."/>
            <person name="Morinaga M."/>
            <person name="Sasaki M."/>
            <person name="Togashi T."/>
            <person name="Oyama M."/>
            <person name="Hata H."/>
            <person name="Watanabe M."/>
            <person name="Komatsu T."/>
            <person name="Mizushima-Sugano J."/>
            <person name="Satoh T."/>
            <person name="Shirai Y."/>
            <person name="Takahashi Y."/>
            <person name="Nakagawa K."/>
            <person name="Okumura K."/>
            <person name="Nagase T."/>
            <person name="Nomura N."/>
            <person name="Kikuchi H."/>
            <person name="Masuho Y."/>
            <person name="Yamashita R."/>
            <person name="Nakai K."/>
            <person name="Yada T."/>
            <person name="Nakamura Y."/>
            <person name="Ohara O."/>
            <person name="Isogai T."/>
            <person name="Sugano S."/>
        </authorList>
    </citation>
    <scope>NUCLEOTIDE SEQUENCE [LARGE SCALE MRNA] (ISOFORM 1)</scope>
    <source>
        <tissue>Hippocampus</tissue>
    </source>
</reference>
<reference key="5">
    <citation type="journal article" date="2007" name="BMC Genomics">
        <title>The full-ORF clone resource of the German cDNA consortium.</title>
        <authorList>
            <person name="Bechtel S."/>
            <person name="Rosenfelder H."/>
            <person name="Duda A."/>
            <person name="Schmidt C.P."/>
            <person name="Ernst U."/>
            <person name="Wellenreuther R."/>
            <person name="Mehrle A."/>
            <person name="Schuster C."/>
            <person name="Bahr A."/>
            <person name="Bloecker H."/>
            <person name="Heubner D."/>
            <person name="Hoerlein A."/>
            <person name="Michel G."/>
            <person name="Wedler H."/>
            <person name="Koehrer K."/>
            <person name="Ottenwaelder B."/>
            <person name="Poustka A."/>
            <person name="Wiemann S."/>
            <person name="Schupp I."/>
        </authorList>
    </citation>
    <scope>NUCLEOTIDE SEQUENCE [LARGE SCALE MRNA]</scope>
    <source>
        <tissue>Uterine endothelium</tissue>
    </source>
</reference>
<reference key="6">
    <citation type="journal article" date="2006" name="Nature">
        <title>The finished DNA sequence of human chromosome 12.</title>
        <authorList>
            <person name="Scherer S.E."/>
            <person name="Muzny D.M."/>
            <person name="Buhay C.J."/>
            <person name="Chen R."/>
            <person name="Cree A."/>
            <person name="Ding Y."/>
            <person name="Dugan-Rocha S."/>
            <person name="Gill R."/>
            <person name="Gunaratne P."/>
            <person name="Harris R.A."/>
            <person name="Hawes A.C."/>
            <person name="Hernandez J."/>
            <person name="Hodgson A.V."/>
            <person name="Hume J."/>
            <person name="Jackson A."/>
            <person name="Khan Z.M."/>
            <person name="Kovar-Smith C."/>
            <person name="Lewis L.R."/>
            <person name="Lozado R.J."/>
            <person name="Metzker M.L."/>
            <person name="Milosavljevic A."/>
            <person name="Miner G.R."/>
            <person name="Montgomery K.T."/>
            <person name="Morgan M.B."/>
            <person name="Nazareth L.V."/>
            <person name="Scott G."/>
            <person name="Sodergren E."/>
            <person name="Song X.-Z."/>
            <person name="Steffen D."/>
            <person name="Lovering R.C."/>
            <person name="Wheeler D.A."/>
            <person name="Worley K.C."/>
            <person name="Yuan Y."/>
            <person name="Zhang Z."/>
            <person name="Adams C.Q."/>
            <person name="Ansari-Lari M.A."/>
            <person name="Ayele M."/>
            <person name="Brown M.J."/>
            <person name="Chen G."/>
            <person name="Chen Z."/>
            <person name="Clerc-Blankenburg K.P."/>
            <person name="Davis C."/>
            <person name="Delgado O."/>
            <person name="Dinh H.H."/>
            <person name="Draper H."/>
            <person name="Gonzalez-Garay M.L."/>
            <person name="Havlak P."/>
            <person name="Jackson L.R."/>
            <person name="Jacob L.S."/>
            <person name="Kelly S.H."/>
            <person name="Li L."/>
            <person name="Li Z."/>
            <person name="Liu J."/>
            <person name="Liu W."/>
            <person name="Lu J."/>
            <person name="Maheshwari M."/>
            <person name="Nguyen B.-V."/>
            <person name="Okwuonu G.O."/>
            <person name="Pasternak S."/>
            <person name="Perez L.M."/>
            <person name="Plopper F.J.H."/>
            <person name="Santibanez J."/>
            <person name="Shen H."/>
            <person name="Tabor P.E."/>
            <person name="Verduzco D."/>
            <person name="Waldron L."/>
            <person name="Wang Q."/>
            <person name="Williams G.A."/>
            <person name="Zhang J."/>
            <person name="Zhou J."/>
            <person name="Allen C.C."/>
            <person name="Amin A.G."/>
            <person name="Anyalebechi V."/>
            <person name="Bailey M."/>
            <person name="Barbaria J.A."/>
            <person name="Bimage K.E."/>
            <person name="Bryant N.P."/>
            <person name="Burch P.E."/>
            <person name="Burkett C.E."/>
            <person name="Burrell K.L."/>
            <person name="Calderon E."/>
            <person name="Cardenas V."/>
            <person name="Carter K."/>
            <person name="Casias K."/>
            <person name="Cavazos I."/>
            <person name="Cavazos S.R."/>
            <person name="Ceasar H."/>
            <person name="Chacko J."/>
            <person name="Chan S.N."/>
            <person name="Chavez D."/>
            <person name="Christopoulos C."/>
            <person name="Chu J."/>
            <person name="Cockrell R."/>
            <person name="Cox C.D."/>
            <person name="Dang M."/>
            <person name="Dathorne S.R."/>
            <person name="David R."/>
            <person name="Davis C.M."/>
            <person name="Davy-Carroll L."/>
            <person name="Deshazo D.R."/>
            <person name="Donlin J.E."/>
            <person name="D'Souza L."/>
            <person name="Eaves K.A."/>
            <person name="Egan A."/>
            <person name="Emery-Cohen A.J."/>
            <person name="Escotto M."/>
            <person name="Flagg N."/>
            <person name="Forbes L.D."/>
            <person name="Gabisi A.M."/>
            <person name="Garza M."/>
            <person name="Hamilton C."/>
            <person name="Henderson N."/>
            <person name="Hernandez O."/>
            <person name="Hines S."/>
            <person name="Hogues M.E."/>
            <person name="Huang M."/>
            <person name="Idlebird D.G."/>
            <person name="Johnson R."/>
            <person name="Jolivet A."/>
            <person name="Jones S."/>
            <person name="Kagan R."/>
            <person name="King L.M."/>
            <person name="Leal B."/>
            <person name="Lebow H."/>
            <person name="Lee S."/>
            <person name="LeVan J.M."/>
            <person name="Lewis L.C."/>
            <person name="London P."/>
            <person name="Lorensuhewa L.M."/>
            <person name="Loulseged H."/>
            <person name="Lovett D.A."/>
            <person name="Lucier A."/>
            <person name="Lucier R.L."/>
            <person name="Ma J."/>
            <person name="Madu R.C."/>
            <person name="Mapua P."/>
            <person name="Martindale A.D."/>
            <person name="Martinez E."/>
            <person name="Massey E."/>
            <person name="Mawhiney S."/>
            <person name="Meador M.G."/>
            <person name="Mendez S."/>
            <person name="Mercado C."/>
            <person name="Mercado I.C."/>
            <person name="Merritt C.E."/>
            <person name="Miner Z.L."/>
            <person name="Minja E."/>
            <person name="Mitchell T."/>
            <person name="Mohabbat F."/>
            <person name="Mohabbat K."/>
            <person name="Montgomery B."/>
            <person name="Moore N."/>
            <person name="Morris S."/>
            <person name="Munidasa M."/>
            <person name="Ngo R.N."/>
            <person name="Nguyen N.B."/>
            <person name="Nickerson E."/>
            <person name="Nwaokelemeh O.O."/>
            <person name="Nwokenkwo S."/>
            <person name="Obregon M."/>
            <person name="Oguh M."/>
            <person name="Oragunye N."/>
            <person name="Oviedo R.J."/>
            <person name="Parish B.J."/>
            <person name="Parker D.N."/>
            <person name="Parrish J."/>
            <person name="Parks K.L."/>
            <person name="Paul H.A."/>
            <person name="Payton B.A."/>
            <person name="Perez A."/>
            <person name="Perrin W."/>
            <person name="Pickens A."/>
            <person name="Primus E.L."/>
            <person name="Pu L.-L."/>
            <person name="Puazo M."/>
            <person name="Quiles M.M."/>
            <person name="Quiroz J.B."/>
            <person name="Rabata D."/>
            <person name="Reeves K."/>
            <person name="Ruiz S.J."/>
            <person name="Shao H."/>
            <person name="Sisson I."/>
            <person name="Sonaike T."/>
            <person name="Sorelle R.P."/>
            <person name="Sutton A.E."/>
            <person name="Svatek A.F."/>
            <person name="Svetz L.A."/>
            <person name="Tamerisa K.S."/>
            <person name="Taylor T.R."/>
            <person name="Teague B."/>
            <person name="Thomas N."/>
            <person name="Thorn R.D."/>
            <person name="Trejos Z.Y."/>
            <person name="Trevino B.K."/>
            <person name="Ukegbu O.N."/>
            <person name="Urban J.B."/>
            <person name="Vasquez L.I."/>
            <person name="Vera V.A."/>
            <person name="Villasana D.M."/>
            <person name="Wang L."/>
            <person name="Ward-Moore S."/>
            <person name="Warren J.T."/>
            <person name="Wei X."/>
            <person name="White F."/>
            <person name="Williamson A.L."/>
            <person name="Wleczyk R."/>
            <person name="Wooden H.S."/>
            <person name="Wooden S.H."/>
            <person name="Yen J."/>
            <person name="Yoon L."/>
            <person name="Yoon V."/>
            <person name="Zorrilla S.E."/>
            <person name="Nelson D."/>
            <person name="Kucherlapati R."/>
            <person name="Weinstock G."/>
            <person name="Gibbs R.A."/>
        </authorList>
    </citation>
    <scope>NUCLEOTIDE SEQUENCE [LARGE SCALE GENOMIC DNA]</scope>
</reference>
<reference key="7">
    <citation type="journal article" date="2004" name="Genome Res.">
        <title>The status, quality, and expansion of the NIH full-length cDNA project: the Mammalian Gene Collection (MGC).</title>
        <authorList>
            <consortium name="The MGC Project Team"/>
        </authorList>
    </citation>
    <scope>NUCLEOTIDE SEQUENCE [LARGE SCALE MRNA] (ISOFORM 1)</scope>
</reference>
<reference key="8">
    <citation type="journal article" date="2001" name="J. Lipid Res.">
        <title>The OSBP-related protein family in humans.</title>
        <authorList>
            <person name="Lehto M."/>
            <person name="Laitinen S."/>
            <person name="Chinetti G."/>
            <person name="Johansson M."/>
            <person name="Ehnholm C."/>
            <person name="Staels B."/>
            <person name="Ikonen E."/>
            <person name="Olkkonen V.M."/>
        </authorList>
    </citation>
    <scope>NUCLEOTIDE SEQUENCE [MRNA] OF 1-578 (ISOFORM 2)</scope>
</reference>
<reference key="9">
    <citation type="journal article" date="2006" name="Cell">
        <title>Global, in vivo, and site-specific phosphorylation dynamics in signaling networks.</title>
        <authorList>
            <person name="Olsen J.V."/>
            <person name="Blagoev B."/>
            <person name="Gnad F."/>
            <person name="Macek B."/>
            <person name="Kumar C."/>
            <person name="Mortensen P."/>
            <person name="Mann M."/>
        </authorList>
    </citation>
    <scope>IDENTIFICATION BY MASS SPECTROMETRY [LARGE SCALE ANALYSIS]</scope>
    <source>
        <tissue>Cervix carcinoma</tissue>
    </source>
</reference>
<reference key="10">
    <citation type="journal article" date="2007" name="Biochem. J.">
        <title>The mammalian oxysterol-binding protein-related proteins (ORPs) bind 25-hydroxycholesterol in an evolutionarily conserved pocket.</title>
        <authorList>
            <person name="Suchanek M."/>
            <person name="Hynynen R."/>
            <person name="Wohlfahrt G."/>
            <person name="Lehto M."/>
            <person name="Johansson M."/>
            <person name="Saarinen H."/>
            <person name="Radzikowska A."/>
            <person name="Thiele C."/>
            <person name="Olkkonen V.M."/>
        </authorList>
    </citation>
    <scope>FUNCTION</scope>
</reference>
<reference key="11">
    <citation type="journal article" date="2008" name="J. Biol. Chem.">
        <title>OSBP-related protein 8 (ORP8) suppresses ABCA1 expression and cholesterol efflux from macrophages.</title>
        <authorList>
            <person name="Yan D."/>
            <person name="Mayranpaa M.I."/>
            <person name="Wong J."/>
            <person name="Perttila J."/>
            <person name="Lehto M."/>
            <person name="Jauhiainen M."/>
            <person name="Kovanen P.T."/>
            <person name="Ehnholm C."/>
            <person name="Brown A.J."/>
            <person name="Olkkonen V.M."/>
        </authorList>
    </citation>
    <scope>FUNCTION</scope>
    <scope>SUBCELLULAR LOCATION</scope>
    <scope>TISSUE SPECIFICITY</scope>
</reference>
<reference key="12">
    <citation type="journal article" date="2008" name="J. Proteome Res.">
        <title>Combining protein-based IMAC, peptide-based IMAC, and MudPIT for efficient phosphoproteomic analysis.</title>
        <authorList>
            <person name="Cantin G.T."/>
            <person name="Yi W."/>
            <person name="Lu B."/>
            <person name="Park S.K."/>
            <person name="Xu T."/>
            <person name="Lee J.-D."/>
            <person name="Yates J.R. III"/>
        </authorList>
    </citation>
    <scope>PHOSPHORYLATION [LARGE SCALE ANALYSIS] AT SER-68</scope>
    <scope>IDENTIFICATION BY MASS SPECTROMETRY [LARGE SCALE ANALYSIS]</scope>
    <source>
        <tissue>Cervix carcinoma</tissue>
    </source>
</reference>
<reference key="13">
    <citation type="journal article" date="2008" name="Proc. Natl. Acad. Sci. U.S.A.">
        <title>A quantitative atlas of mitotic phosphorylation.</title>
        <authorList>
            <person name="Dephoure N."/>
            <person name="Zhou C."/>
            <person name="Villen J."/>
            <person name="Beausoleil S.A."/>
            <person name="Bakalarski C.E."/>
            <person name="Elledge S.J."/>
            <person name="Gygi S.P."/>
        </authorList>
    </citation>
    <scope>PHOSPHORYLATION [LARGE SCALE ANALYSIS] AT SER-65; SER-68; SER-314; SER-807; SER-808; SER-810 AND SER-814</scope>
    <scope>IDENTIFICATION BY MASS SPECTROMETRY [LARGE SCALE ANALYSIS]</scope>
    <source>
        <tissue>Cervix carcinoma</tissue>
    </source>
</reference>
<reference key="14">
    <citation type="journal article" date="2009" name="Sci. Signal.">
        <title>Quantitative phosphoproteomic analysis of T cell receptor signaling reveals system-wide modulation of protein-protein interactions.</title>
        <authorList>
            <person name="Mayya V."/>
            <person name="Lundgren D.H."/>
            <person name="Hwang S.-I."/>
            <person name="Rezaul K."/>
            <person name="Wu L."/>
            <person name="Eng J.K."/>
            <person name="Rodionov V."/>
            <person name="Han D.K."/>
        </authorList>
    </citation>
    <scope>PHOSPHORYLATION [LARGE SCALE ANALYSIS] AT SER-314</scope>
    <scope>IDENTIFICATION BY MASS SPECTROMETRY [LARGE SCALE ANALYSIS]</scope>
    <source>
        <tissue>Leukemic T-cell</tissue>
    </source>
</reference>
<reference key="15">
    <citation type="journal article" date="2010" name="Sci. Signal.">
        <title>Quantitative phosphoproteomics reveals widespread full phosphorylation site occupancy during mitosis.</title>
        <authorList>
            <person name="Olsen J.V."/>
            <person name="Vermeulen M."/>
            <person name="Santamaria A."/>
            <person name="Kumar C."/>
            <person name="Miller M.L."/>
            <person name="Jensen L.J."/>
            <person name="Gnad F."/>
            <person name="Cox J."/>
            <person name="Jensen T.S."/>
            <person name="Nigg E.A."/>
            <person name="Brunak S."/>
            <person name="Mann M."/>
        </authorList>
    </citation>
    <scope>PHOSPHORYLATION [LARGE SCALE ANALYSIS] AT SER-68</scope>
    <scope>IDENTIFICATION BY MASS SPECTROMETRY [LARGE SCALE ANALYSIS]</scope>
    <source>
        <tissue>Cervix carcinoma</tissue>
    </source>
</reference>
<reference key="16">
    <citation type="journal article" date="2011" name="BMC Syst. Biol.">
        <title>Initial characterization of the human central proteome.</title>
        <authorList>
            <person name="Burkard T.R."/>
            <person name="Planyavsky M."/>
            <person name="Kaupe I."/>
            <person name="Breitwieser F.P."/>
            <person name="Buerckstuemmer T."/>
            <person name="Bennett K.L."/>
            <person name="Superti-Furga G."/>
            <person name="Colinge J."/>
        </authorList>
    </citation>
    <scope>IDENTIFICATION BY MASS SPECTROMETRY [LARGE SCALE ANALYSIS]</scope>
</reference>
<reference key="17">
    <citation type="journal article" date="2011" name="PLoS ONE">
        <title>OSBP-related protein 8 (ORP8) regulates plasma and liver tissue lipid levels and interacts with the nucleoporin Nup62.</title>
        <authorList>
            <person name="Zhou T."/>
            <person name="Li S."/>
            <person name="Zhong W."/>
            <person name="Vihervaara T."/>
            <person name="Beaslas O."/>
            <person name="Perttila J."/>
            <person name="Luo W."/>
            <person name="Jiang Y."/>
            <person name="Lehto M."/>
            <person name="Olkkonen V.M."/>
            <person name="Yan D."/>
        </authorList>
    </citation>
    <scope>FUNCTION</scope>
    <scope>SUBCELLULAR LOCATION</scope>
    <scope>INTERACTION WITH NUP62</scope>
</reference>
<reference key="18">
    <citation type="journal article" date="2011" name="Sci. Signal.">
        <title>System-wide temporal characterization of the proteome and phosphoproteome of human embryonic stem cell differentiation.</title>
        <authorList>
            <person name="Rigbolt K.T."/>
            <person name="Prokhorova T.A."/>
            <person name="Akimov V."/>
            <person name="Henningsen J."/>
            <person name="Johansen P.T."/>
            <person name="Kratchmarova I."/>
            <person name="Kassem M."/>
            <person name="Mann M."/>
            <person name="Olsen J.V."/>
            <person name="Blagoev B."/>
        </authorList>
    </citation>
    <scope>PHOSPHORYLATION [LARGE SCALE ANALYSIS] AT SER-68; SER-328; SER-342; SER-807 AND SER-808</scope>
    <scope>IDENTIFICATION BY MASS SPECTROMETRY [LARGE SCALE ANALYSIS]</scope>
</reference>
<reference key="19">
    <citation type="journal article" date="2012" name="Proc. Natl. Acad. Sci. U.S.A.">
        <title>N-terminal acetylome analyses and functional insights of the N-terminal acetyltransferase NatB.</title>
        <authorList>
            <person name="Van Damme P."/>
            <person name="Lasa M."/>
            <person name="Polevoda B."/>
            <person name="Gazquez C."/>
            <person name="Elosegui-Artola A."/>
            <person name="Kim D.S."/>
            <person name="De Juan-Pardo E."/>
            <person name="Demeyer K."/>
            <person name="Hole K."/>
            <person name="Larrea E."/>
            <person name="Timmerman E."/>
            <person name="Prieto J."/>
            <person name="Arnesen T."/>
            <person name="Sherman F."/>
            <person name="Gevaert K."/>
            <person name="Aldabe R."/>
        </authorList>
    </citation>
    <scope>ACETYLATION [LARGE SCALE ANALYSIS] AT MET-1</scope>
    <scope>IDENTIFICATION BY MASS SPECTROMETRY [LARGE SCALE ANALYSIS]</scope>
</reference>
<reference key="20">
    <citation type="journal article" date="2013" name="J. Proteome Res.">
        <title>Toward a comprehensive characterization of a human cancer cell phosphoproteome.</title>
        <authorList>
            <person name="Zhou H."/>
            <person name="Di Palma S."/>
            <person name="Preisinger C."/>
            <person name="Peng M."/>
            <person name="Polat A.N."/>
            <person name="Heck A.J."/>
            <person name="Mohammed S."/>
        </authorList>
    </citation>
    <scope>PHOSPHORYLATION [LARGE SCALE ANALYSIS] AT SER-14; SER-65 AND SER-314</scope>
    <scope>IDENTIFICATION BY MASS SPECTROMETRY [LARGE SCALE ANALYSIS]</scope>
    <source>
        <tissue>Cervix carcinoma</tissue>
        <tissue>Erythroleukemia</tissue>
    </source>
</reference>
<reference key="21">
    <citation type="journal article" date="2014" name="Exp. Cell Res.">
        <title>OSBP-related protein 8 (ORP8) interacts with Homo sapiens sperm associated antigen 5 (SPAG5) and mediates oxysterol interference of HepG2 cell cycle.</title>
        <authorList>
            <person name="Zhong W."/>
            <person name="Zhou Y."/>
            <person name="Li J."/>
            <person name="Mysore R."/>
            <person name="Luo W."/>
            <person name="Li S."/>
            <person name="Chang M.S."/>
            <person name="Olkkonen V.M."/>
            <person name="Yan D."/>
        </authorList>
    </citation>
    <scope>INTERACTION WITH SPAG5</scope>
</reference>
<reference key="22">
    <citation type="journal article" date="2014" name="J. Proteomics">
        <title>An enzyme assisted RP-RPLC approach for in-depth analysis of human liver phosphoproteome.</title>
        <authorList>
            <person name="Bian Y."/>
            <person name="Song C."/>
            <person name="Cheng K."/>
            <person name="Dong M."/>
            <person name="Wang F."/>
            <person name="Huang J."/>
            <person name="Sun D."/>
            <person name="Wang L."/>
            <person name="Ye M."/>
            <person name="Zou H."/>
        </authorList>
    </citation>
    <scope>PHOSPHORYLATION [LARGE SCALE ANALYSIS] AT SER-807 AND SER-808</scope>
    <scope>IDENTIFICATION BY MASS SPECTROMETRY [LARGE SCALE ANALYSIS]</scope>
    <source>
        <tissue>Liver</tissue>
    </source>
</reference>
<reference key="23">
    <citation type="journal article" date="2015" name="Proteomics">
        <title>N-terminome analysis of the human mitochondrial proteome.</title>
        <authorList>
            <person name="Vaca Jacome A.S."/>
            <person name="Rabilloud T."/>
            <person name="Schaeffer-Reiss C."/>
            <person name="Rompais M."/>
            <person name="Ayoub D."/>
            <person name="Lane L."/>
            <person name="Bairoch A."/>
            <person name="Van Dorsselaer A."/>
            <person name="Carapito C."/>
        </authorList>
    </citation>
    <scope>IDENTIFICATION BY MASS SPECTROMETRY [LARGE SCALE ANALYSIS]</scope>
</reference>
<reference key="24">
    <citation type="journal article" date="2015" name="Science">
        <title>PI4P/phosphatidylserine countertransport at ORP5- and ORP8-mediated ER-plasma membrane contacts.</title>
        <authorList>
            <person name="Chung J."/>
            <person name="Torta F."/>
            <person name="Masai K."/>
            <person name="Lucast L."/>
            <person name="Czapla H."/>
            <person name="Tanner L.B."/>
            <person name="Narayanaswamy P."/>
            <person name="Wenk M.R."/>
            <person name="Nakatsu F."/>
            <person name="De Camilli P."/>
        </authorList>
    </citation>
    <scope>FUNCTION</scope>
    <scope>SUBCELLULAR LOCATION (ISOFORMS 1 AND 3)</scope>
    <scope>MUTAGENESIS OF 514-HIS-515</scope>
</reference>
<reference key="25">
    <citation type="submission" date="2004-06" db="PDB data bank">
        <title>Solution structure of the pleckstrin homology domain of oxysterol-binding protein-related protein 8 (KIAA1451 protein).</title>
        <authorList>
            <consortium name="RIKEN structural genomics initiative (RSGI)"/>
        </authorList>
    </citation>
    <scope>STRUCTURE BY NMR OF 147-265</scope>
</reference>
<evidence type="ECO:0000250" key="1">
    <source>
        <dbReference type="UniProtKB" id="Q02201"/>
    </source>
</evidence>
<evidence type="ECO:0000255" key="2"/>
<evidence type="ECO:0000255" key="3">
    <source>
        <dbReference type="PROSITE-ProRule" id="PRU00145"/>
    </source>
</evidence>
<evidence type="ECO:0000256" key="4">
    <source>
        <dbReference type="SAM" id="MobiDB-lite"/>
    </source>
</evidence>
<evidence type="ECO:0000269" key="5">
    <source>
    </source>
</evidence>
<evidence type="ECO:0000269" key="6">
    <source>
    </source>
</evidence>
<evidence type="ECO:0000269" key="7">
    <source>
    </source>
</evidence>
<evidence type="ECO:0000269" key="8">
    <source>
    </source>
</evidence>
<evidence type="ECO:0000269" key="9">
    <source>
    </source>
</evidence>
<evidence type="ECO:0000269" key="10">
    <source>
    </source>
</evidence>
<evidence type="ECO:0000303" key="11">
    <source>
    </source>
</evidence>
<evidence type="ECO:0000303" key="12">
    <source>
    </source>
</evidence>
<evidence type="ECO:0000303" key="13">
    <source>
    </source>
</evidence>
<evidence type="ECO:0000305" key="14"/>
<evidence type="ECO:0000305" key="15">
    <source>
    </source>
</evidence>
<evidence type="ECO:0007744" key="16">
    <source>
    </source>
</evidence>
<evidence type="ECO:0007744" key="17">
    <source>
    </source>
</evidence>
<evidence type="ECO:0007744" key="18">
    <source>
    </source>
</evidence>
<evidence type="ECO:0007744" key="19">
    <source>
    </source>
</evidence>
<evidence type="ECO:0007744" key="20">
    <source>
    </source>
</evidence>
<evidence type="ECO:0007744" key="21">
    <source>
    </source>
</evidence>
<evidence type="ECO:0007744" key="22">
    <source>
    </source>
</evidence>
<evidence type="ECO:0007744" key="23">
    <source>
    </source>
</evidence>
<evidence type="ECO:0007829" key="24">
    <source>
        <dbReference type="PDB" id="1V88"/>
    </source>
</evidence>
<evidence type="ECO:0007829" key="25">
    <source>
        <dbReference type="PDB" id="5U77"/>
    </source>
</evidence>
<evidence type="ECO:0007829" key="26">
    <source>
        <dbReference type="PDB" id="5U78"/>
    </source>
</evidence>
<sequence length="889" mass="101196">MEGGLADGEPDRTSLLGDSKDVLGPSTVVANSDESQLLTPGKMSQRQGKEAYPTPTKDLHQPSLSPASPHSQGFERGKEDISQNKDESSLSMSKSKSESKLYNGSEKDSSTSSKLTKKESLKVQKKNYREEKKRATKELLSTITDPSVIVMADWLKIRGTLKSWTKLWCVLKPGVLLIYKTQKNGQWVGTVLLNACEIIERPSKKDGFCFKLFHPLEQSIWAVKGPKGEAVGSITQPLPSSYLIIRATSESDGRCWMDALELALKCSSLLKRTMIREGKEHDLSVSSDSTHVTFYGLLRANNLHSGDNFQLNDSEIERQHFKDQDMYSDKSDKENDQEHDESDNEVMGKSEESDTDTSERQDDSYIEPEPVEPLKETTYTEQSHEELGEAGEASQTETVSEENKSLIWTLLKQVRPGMDLSKVVLPTFILEPRSFLDKLSDYYYHADFLSEAALEENPYFRLKKVVKWYLSGFYKKPKGLKKPYNPILGETFRCLWIHPRTNSKTFYIAEQVSHHPPISAFYVSNRKDGFCLSGSILAKSKFYGNSLSAILEGEARLTFLNRGEDYVMTMPYAHCKGILYGTMTLELGGTVNITCQKTGYSAILEFKLKPFLGSSDCVNQISGKLKLGKEVLATLEGHWDSEVFITDKKTDNSEVFWNPTPDIKQWRLIRHTVKFEEQGDFESEKLWQRVTRAINAKDQTEATQEKYVLEEAQRQAARDRKTKNEEWSCKLFELDPLTGEWHYKFADTRPWDPLNDMIQFEKDGVIQTKVKHRTPMVSVPKMKHKPTRQQKKVAKGYSSPEPDIQDSSGSEAQSVKPSTRRKKGIELGDIQSSIESIKQTQEEIKRNIMALRNHLVSSTPATDYFLQQKDYFIIFLLILLQVIINFMFK</sequence>
<organism>
    <name type="scientific">Homo sapiens</name>
    <name type="common">Human</name>
    <dbReference type="NCBI Taxonomy" id="9606"/>
    <lineage>
        <taxon>Eukaryota</taxon>
        <taxon>Metazoa</taxon>
        <taxon>Chordata</taxon>
        <taxon>Craniata</taxon>
        <taxon>Vertebrata</taxon>
        <taxon>Euteleostomi</taxon>
        <taxon>Mammalia</taxon>
        <taxon>Eutheria</taxon>
        <taxon>Euarchontoglires</taxon>
        <taxon>Primates</taxon>
        <taxon>Haplorrhini</taxon>
        <taxon>Catarrhini</taxon>
        <taxon>Hominidae</taxon>
        <taxon>Homo</taxon>
    </lineage>
</organism>
<protein>
    <recommendedName>
        <fullName>Oxysterol-binding protein-related protein 8</fullName>
        <shortName>ORP-8</shortName>
        <shortName>OSBP-related protein 8</shortName>
    </recommendedName>
</protein>